<name>FBID_MYCSK</name>
<sequence>MRGTTSNGAAPSGAGVAVVIAVKRLADAKTRLAPIFAPHDRETVVLAMLVDTVAAAAAVAAVTVVTPDPAAAEAARALGAQVLDDPTPAGHPDPLNNALRAAEAAVRATVPNVVALQGDLPALQAQELSEAIAAARTRPRSFVGDRHGTGTSALFAFGVPLDPRFGPDSAERHRRSGAVELTGSWPGLRYDIDTPDDLLAARRLGVGTQTARAVGAER</sequence>
<gene>
    <name evidence="1" type="primary">fbiD</name>
    <name type="ordered locus">Mkms_1972</name>
</gene>
<reference key="1">
    <citation type="submission" date="2006-12" db="EMBL/GenBank/DDBJ databases">
        <title>Complete sequence of chromosome of Mycobacterium sp. KMS.</title>
        <authorList>
            <consortium name="US DOE Joint Genome Institute"/>
            <person name="Copeland A."/>
            <person name="Lucas S."/>
            <person name="Lapidus A."/>
            <person name="Barry K."/>
            <person name="Detter J.C."/>
            <person name="Glavina del Rio T."/>
            <person name="Hammon N."/>
            <person name="Israni S."/>
            <person name="Dalin E."/>
            <person name="Tice H."/>
            <person name="Pitluck S."/>
            <person name="Kiss H."/>
            <person name="Brettin T."/>
            <person name="Bruce D."/>
            <person name="Han C."/>
            <person name="Tapia R."/>
            <person name="Gilna P."/>
            <person name="Schmutz J."/>
            <person name="Larimer F."/>
            <person name="Land M."/>
            <person name="Hauser L."/>
            <person name="Kyrpides N."/>
            <person name="Mikhailova N."/>
            <person name="Miller C.D."/>
            <person name="Richardson P."/>
        </authorList>
    </citation>
    <scope>NUCLEOTIDE SEQUENCE [LARGE SCALE GENOMIC DNA]</scope>
    <source>
        <strain>KMS</strain>
    </source>
</reference>
<organism>
    <name type="scientific">Mycobacterium sp. (strain KMS)</name>
    <dbReference type="NCBI Taxonomy" id="189918"/>
    <lineage>
        <taxon>Bacteria</taxon>
        <taxon>Bacillati</taxon>
        <taxon>Actinomycetota</taxon>
        <taxon>Actinomycetes</taxon>
        <taxon>Mycobacteriales</taxon>
        <taxon>Mycobacteriaceae</taxon>
        <taxon>Mycobacterium</taxon>
    </lineage>
</organism>
<evidence type="ECO:0000255" key="1">
    <source>
        <dbReference type="HAMAP-Rule" id="MF_02114"/>
    </source>
</evidence>
<accession>A1UEB3</accession>
<dbReference type="EC" id="2.7.7.105" evidence="1"/>
<dbReference type="EMBL" id="CP000518">
    <property type="protein sequence ID" value="ABL91171.1"/>
    <property type="molecule type" value="Genomic_DNA"/>
</dbReference>
<dbReference type="SMR" id="A1UEB3"/>
<dbReference type="STRING" id="189918.Mkms_1972"/>
<dbReference type="KEGG" id="mkm:Mkms_1972"/>
<dbReference type="HOGENOM" id="CLU_076569_0_0_11"/>
<dbReference type="OrthoDB" id="9151145at2"/>
<dbReference type="UniPathway" id="UPA00071"/>
<dbReference type="GO" id="GO:0005525">
    <property type="term" value="F:GTP binding"/>
    <property type="evidence" value="ECO:0007669"/>
    <property type="project" value="UniProtKB-KW"/>
</dbReference>
<dbReference type="GO" id="GO:0043814">
    <property type="term" value="F:phospholactate guanylyltransferase activity"/>
    <property type="evidence" value="ECO:0007669"/>
    <property type="project" value="InterPro"/>
</dbReference>
<dbReference type="GO" id="GO:0052645">
    <property type="term" value="P:F420-0 metabolic process"/>
    <property type="evidence" value="ECO:0007669"/>
    <property type="project" value="UniProtKB-UniRule"/>
</dbReference>
<dbReference type="Gene3D" id="3.90.550.10">
    <property type="entry name" value="Spore Coat Polysaccharide Biosynthesis Protein SpsA, Chain A"/>
    <property type="match status" value="1"/>
</dbReference>
<dbReference type="HAMAP" id="MF_02114">
    <property type="entry name" value="CofC"/>
    <property type="match status" value="1"/>
</dbReference>
<dbReference type="InterPro" id="IPR002835">
    <property type="entry name" value="CofC"/>
</dbReference>
<dbReference type="InterPro" id="IPR029044">
    <property type="entry name" value="Nucleotide-diphossugar_trans"/>
</dbReference>
<dbReference type="NCBIfam" id="TIGR03552">
    <property type="entry name" value="F420_cofC"/>
    <property type="match status" value="1"/>
</dbReference>
<dbReference type="PANTHER" id="PTHR40392">
    <property type="entry name" value="2-PHOSPHO-L-LACTATE GUANYLYLTRANSFERASE"/>
    <property type="match status" value="1"/>
</dbReference>
<dbReference type="PANTHER" id="PTHR40392:SF1">
    <property type="entry name" value="2-PHOSPHO-L-LACTATE GUANYLYLTRANSFERASE"/>
    <property type="match status" value="1"/>
</dbReference>
<dbReference type="Pfam" id="PF01983">
    <property type="entry name" value="CofC"/>
    <property type="match status" value="1"/>
</dbReference>
<dbReference type="SUPFAM" id="SSF53448">
    <property type="entry name" value="Nucleotide-diphospho-sugar transferases"/>
    <property type="match status" value="1"/>
</dbReference>
<proteinExistence type="inferred from homology"/>
<comment type="function">
    <text evidence="1">Guanylyltransferase that catalyzes the activation of phosphoenolpyruvate (PEP) as enolpyruvoyl-2-diphospho-5'-guanosine, via the condensation of PEP with GTP. It is involved in the biosynthesis of coenzyme F420, a hydride carrier cofactor.</text>
</comment>
<comment type="catalytic activity">
    <reaction evidence="1">
        <text>phosphoenolpyruvate + GTP + H(+) = enolpyruvoyl-2-diphospho-5'-guanosine + diphosphate</text>
        <dbReference type="Rhea" id="RHEA:30519"/>
        <dbReference type="ChEBI" id="CHEBI:15378"/>
        <dbReference type="ChEBI" id="CHEBI:33019"/>
        <dbReference type="ChEBI" id="CHEBI:37565"/>
        <dbReference type="ChEBI" id="CHEBI:58702"/>
        <dbReference type="ChEBI" id="CHEBI:143701"/>
        <dbReference type="EC" id="2.7.7.105"/>
    </reaction>
</comment>
<comment type="pathway">
    <text evidence="1">Cofactor biosynthesis; coenzyme F420 biosynthesis.</text>
</comment>
<comment type="similarity">
    <text evidence="1">Belongs to the CofC family.</text>
</comment>
<feature type="chain" id="PRO_5000209722" description="Phosphoenolpyruvate guanylyltransferase">
    <location>
        <begin position="1"/>
        <end position="218"/>
    </location>
</feature>
<feature type="binding site" evidence="1">
    <location>
        <position position="151"/>
    </location>
    <ligand>
        <name>phosphoenolpyruvate</name>
        <dbReference type="ChEBI" id="CHEBI:58702"/>
    </ligand>
</feature>
<feature type="binding site" evidence="1">
    <location>
        <position position="166"/>
    </location>
    <ligand>
        <name>phosphoenolpyruvate</name>
        <dbReference type="ChEBI" id="CHEBI:58702"/>
    </ligand>
</feature>
<feature type="binding site" evidence="1">
    <location>
        <position position="169"/>
    </location>
    <ligand>
        <name>phosphoenolpyruvate</name>
        <dbReference type="ChEBI" id="CHEBI:58702"/>
    </ligand>
</feature>
<keyword id="KW-0342">GTP-binding</keyword>
<keyword id="KW-0547">Nucleotide-binding</keyword>
<keyword id="KW-0548">Nucleotidyltransferase</keyword>
<keyword id="KW-0808">Transferase</keyword>
<protein>
    <recommendedName>
        <fullName evidence="1">Phosphoenolpyruvate guanylyltransferase</fullName>
        <shortName evidence="1">PEP guanylyltransferase</shortName>
        <ecNumber evidence="1">2.7.7.105</ecNumber>
    </recommendedName>
</protein>